<comment type="function">
    <text evidence="1">Binds directly to 23S ribosomal RNA and is necessary for the in vitro assembly process of the 50S ribosomal subunit. It is not involved in the protein synthesizing functions of that subunit.</text>
</comment>
<comment type="similarity">
    <text evidence="1">Belongs to the bacterial ribosomal protein bL20 family.</text>
</comment>
<sequence>MARVKRGVIARARHKKILKQAKGYYGARSRVYRVAFQAVIKAGQYAYRDRRQRKRQFRQLWIARINAAARQNGISYSKFINGLKKASVEIDRKILADIAVFDKVAFTALVEKAKAALA</sequence>
<dbReference type="EMBL" id="CP001113">
    <property type="protein sequence ID" value="ACF63595.1"/>
    <property type="molecule type" value="Genomic_DNA"/>
</dbReference>
<dbReference type="RefSeq" id="WP_000124850.1">
    <property type="nucleotide sequence ID" value="NZ_CCMR01000003.1"/>
</dbReference>
<dbReference type="SMR" id="B4T4N1"/>
<dbReference type="GeneID" id="98388757"/>
<dbReference type="KEGG" id="see:SNSL254_A1447"/>
<dbReference type="HOGENOM" id="CLU_123265_0_1_6"/>
<dbReference type="Proteomes" id="UP000008824">
    <property type="component" value="Chromosome"/>
</dbReference>
<dbReference type="GO" id="GO:1990904">
    <property type="term" value="C:ribonucleoprotein complex"/>
    <property type="evidence" value="ECO:0007669"/>
    <property type="project" value="UniProtKB-KW"/>
</dbReference>
<dbReference type="GO" id="GO:0005840">
    <property type="term" value="C:ribosome"/>
    <property type="evidence" value="ECO:0007669"/>
    <property type="project" value="UniProtKB-KW"/>
</dbReference>
<dbReference type="GO" id="GO:0019843">
    <property type="term" value="F:rRNA binding"/>
    <property type="evidence" value="ECO:0007669"/>
    <property type="project" value="UniProtKB-UniRule"/>
</dbReference>
<dbReference type="GO" id="GO:0003735">
    <property type="term" value="F:structural constituent of ribosome"/>
    <property type="evidence" value="ECO:0007669"/>
    <property type="project" value="InterPro"/>
</dbReference>
<dbReference type="GO" id="GO:0000027">
    <property type="term" value="P:ribosomal large subunit assembly"/>
    <property type="evidence" value="ECO:0007669"/>
    <property type="project" value="UniProtKB-UniRule"/>
</dbReference>
<dbReference type="GO" id="GO:0006412">
    <property type="term" value="P:translation"/>
    <property type="evidence" value="ECO:0007669"/>
    <property type="project" value="InterPro"/>
</dbReference>
<dbReference type="CDD" id="cd07026">
    <property type="entry name" value="Ribosomal_L20"/>
    <property type="match status" value="1"/>
</dbReference>
<dbReference type="FunFam" id="1.10.1900.20:FF:000001">
    <property type="entry name" value="50S ribosomal protein L20"/>
    <property type="match status" value="1"/>
</dbReference>
<dbReference type="Gene3D" id="6.10.160.10">
    <property type="match status" value="1"/>
</dbReference>
<dbReference type="Gene3D" id="1.10.1900.20">
    <property type="entry name" value="Ribosomal protein L20"/>
    <property type="match status" value="1"/>
</dbReference>
<dbReference type="HAMAP" id="MF_00382">
    <property type="entry name" value="Ribosomal_bL20"/>
    <property type="match status" value="1"/>
</dbReference>
<dbReference type="InterPro" id="IPR005813">
    <property type="entry name" value="Ribosomal_bL20"/>
</dbReference>
<dbReference type="InterPro" id="IPR049946">
    <property type="entry name" value="RIBOSOMAL_L20_CS"/>
</dbReference>
<dbReference type="InterPro" id="IPR035566">
    <property type="entry name" value="Ribosomal_protein_bL20_C"/>
</dbReference>
<dbReference type="NCBIfam" id="TIGR01032">
    <property type="entry name" value="rplT_bact"/>
    <property type="match status" value="1"/>
</dbReference>
<dbReference type="PANTHER" id="PTHR10986">
    <property type="entry name" value="39S RIBOSOMAL PROTEIN L20"/>
    <property type="match status" value="1"/>
</dbReference>
<dbReference type="Pfam" id="PF00453">
    <property type="entry name" value="Ribosomal_L20"/>
    <property type="match status" value="1"/>
</dbReference>
<dbReference type="PRINTS" id="PR00062">
    <property type="entry name" value="RIBOSOMALL20"/>
</dbReference>
<dbReference type="SUPFAM" id="SSF74731">
    <property type="entry name" value="Ribosomal protein L20"/>
    <property type="match status" value="1"/>
</dbReference>
<dbReference type="PROSITE" id="PS00937">
    <property type="entry name" value="RIBOSOMAL_L20"/>
    <property type="match status" value="1"/>
</dbReference>
<feature type="chain" id="PRO_1000122368" description="Large ribosomal subunit protein bL20">
    <location>
        <begin position="1"/>
        <end position="118"/>
    </location>
</feature>
<name>RL20_SALNS</name>
<accession>B4T4N1</accession>
<protein>
    <recommendedName>
        <fullName evidence="1">Large ribosomal subunit protein bL20</fullName>
    </recommendedName>
    <alternativeName>
        <fullName evidence="2">50S ribosomal protein L20</fullName>
    </alternativeName>
</protein>
<gene>
    <name evidence="1" type="primary">rplT</name>
    <name type="ordered locus">SNSL254_A1447</name>
</gene>
<proteinExistence type="inferred from homology"/>
<reference key="1">
    <citation type="journal article" date="2011" name="J. Bacteriol.">
        <title>Comparative genomics of 28 Salmonella enterica isolates: evidence for CRISPR-mediated adaptive sublineage evolution.</title>
        <authorList>
            <person name="Fricke W.F."/>
            <person name="Mammel M.K."/>
            <person name="McDermott P.F."/>
            <person name="Tartera C."/>
            <person name="White D.G."/>
            <person name="Leclerc J.E."/>
            <person name="Ravel J."/>
            <person name="Cebula T.A."/>
        </authorList>
    </citation>
    <scope>NUCLEOTIDE SEQUENCE [LARGE SCALE GENOMIC DNA]</scope>
    <source>
        <strain>SL254</strain>
    </source>
</reference>
<keyword id="KW-0687">Ribonucleoprotein</keyword>
<keyword id="KW-0689">Ribosomal protein</keyword>
<keyword id="KW-0694">RNA-binding</keyword>
<keyword id="KW-0699">rRNA-binding</keyword>
<organism>
    <name type="scientific">Salmonella newport (strain SL254)</name>
    <dbReference type="NCBI Taxonomy" id="423368"/>
    <lineage>
        <taxon>Bacteria</taxon>
        <taxon>Pseudomonadati</taxon>
        <taxon>Pseudomonadota</taxon>
        <taxon>Gammaproteobacteria</taxon>
        <taxon>Enterobacterales</taxon>
        <taxon>Enterobacteriaceae</taxon>
        <taxon>Salmonella</taxon>
    </lineage>
</organism>
<evidence type="ECO:0000255" key="1">
    <source>
        <dbReference type="HAMAP-Rule" id="MF_00382"/>
    </source>
</evidence>
<evidence type="ECO:0000305" key="2"/>